<name>RSMC_CROS8</name>
<organism>
    <name type="scientific">Cronobacter sakazakii (strain ATCC BAA-894)</name>
    <name type="common">Enterobacter sakazakii</name>
    <dbReference type="NCBI Taxonomy" id="290339"/>
    <lineage>
        <taxon>Bacteria</taxon>
        <taxon>Pseudomonadati</taxon>
        <taxon>Pseudomonadota</taxon>
        <taxon>Gammaproteobacteria</taxon>
        <taxon>Enterobacterales</taxon>
        <taxon>Enterobacteriaceae</taxon>
        <taxon>Cronobacter</taxon>
    </lineage>
</organism>
<sequence length="342" mass="37460">MSGFSPASEVLLRHSDDFTESRVLFAGDMQDDLPARFDTAQSRAHTQQFHHWQVLSKPMGDNARYGLVADAEIVADSDTLIYYWPKNKPEAQFQLMNLLSLLPVGTDVFVVGENRSGVRSAEAMLEAHCPLNKVDSARRCGLYHGRLEKQPEFNADGWWGEYQVDDLTIKTLPGVFSRDGLDVGSDLLLSTLSPHTKGKVLDVGCGAGVLAAVLASHSPKVRLTLCDVSAPAVEASRATLAANGFEGEVVASNVFSEIKGRFDMIISNPPFHDGMETSFEAAQTLIRSAVRHLNIGGELRIVANAFLPYPNVLDETFGNHEVLAQTGRFKVYRAVMGRNAKR</sequence>
<accession>A7MGA7</accession>
<protein>
    <recommendedName>
        <fullName evidence="1">Ribosomal RNA small subunit methyltransferase C</fullName>
        <ecNumber evidence="1">2.1.1.172</ecNumber>
    </recommendedName>
    <alternativeName>
        <fullName evidence="1">16S rRNA m2G1207 methyltransferase</fullName>
    </alternativeName>
    <alternativeName>
        <fullName evidence="1">rRNA (guanine-N(2)-)-methyltransferase RsmC</fullName>
    </alternativeName>
</protein>
<proteinExistence type="inferred from homology"/>
<dbReference type="EC" id="2.1.1.172" evidence="1"/>
<dbReference type="EMBL" id="CP000783">
    <property type="protein sequence ID" value="ABU78602.1"/>
    <property type="molecule type" value="Genomic_DNA"/>
</dbReference>
<dbReference type="RefSeq" id="WP_012125845.1">
    <property type="nucleotide sequence ID" value="NC_009778.1"/>
</dbReference>
<dbReference type="SMR" id="A7MGA7"/>
<dbReference type="KEGG" id="esa:ESA_03381"/>
<dbReference type="PATRIC" id="fig|290339.8.peg.3004"/>
<dbReference type="HOGENOM" id="CLU_049581_0_1_6"/>
<dbReference type="Proteomes" id="UP000000260">
    <property type="component" value="Chromosome"/>
</dbReference>
<dbReference type="GO" id="GO:0005737">
    <property type="term" value="C:cytoplasm"/>
    <property type="evidence" value="ECO:0007669"/>
    <property type="project" value="UniProtKB-SubCell"/>
</dbReference>
<dbReference type="GO" id="GO:0052914">
    <property type="term" value="F:16S rRNA (guanine(1207)-N(2))-methyltransferase activity"/>
    <property type="evidence" value="ECO:0007669"/>
    <property type="project" value="UniProtKB-EC"/>
</dbReference>
<dbReference type="GO" id="GO:0003676">
    <property type="term" value="F:nucleic acid binding"/>
    <property type="evidence" value="ECO:0007669"/>
    <property type="project" value="InterPro"/>
</dbReference>
<dbReference type="CDD" id="cd02440">
    <property type="entry name" value="AdoMet_MTases"/>
    <property type="match status" value="1"/>
</dbReference>
<dbReference type="Gene3D" id="3.40.50.150">
    <property type="entry name" value="Vaccinia Virus protein VP39"/>
    <property type="match status" value="2"/>
</dbReference>
<dbReference type="HAMAP" id="MF_01862">
    <property type="entry name" value="16SrRNA_methyltr_C"/>
    <property type="match status" value="1"/>
</dbReference>
<dbReference type="InterPro" id="IPR002052">
    <property type="entry name" value="DNA_methylase_N6_adenine_CS"/>
</dbReference>
<dbReference type="InterPro" id="IPR013675">
    <property type="entry name" value="Mtase_sm_N"/>
</dbReference>
<dbReference type="InterPro" id="IPR023543">
    <property type="entry name" value="rRNA_ssu_MeTfrase_C"/>
</dbReference>
<dbReference type="InterPro" id="IPR046977">
    <property type="entry name" value="RsmC/RlmG"/>
</dbReference>
<dbReference type="InterPro" id="IPR029063">
    <property type="entry name" value="SAM-dependent_MTases_sf"/>
</dbReference>
<dbReference type="InterPro" id="IPR007848">
    <property type="entry name" value="Small_mtfrase_dom"/>
</dbReference>
<dbReference type="NCBIfam" id="NF007023">
    <property type="entry name" value="PRK09489.1"/>
    <property type="match status" value="1"/>
</dbReference>
<dbReference type="PANTHER" id="PTHR47816">
    <property type="entry name" value="RIBOSOMAL RNA SMALL SUBUNIT METHYLTRANSFERASE C"/>
    <property type="match status" value="1"/>
</dbReference>
<dbReference type="PANTHER" id="PTHR47816:SF4">
    <property type="entry name" value="RIBOSOMAL RNA SMALL SUBUNIT METHYLTRANSFERASE C"/>
    <property type="match status" value="1"/>
</dbReference>
<dbReference type="Pfam" id="PF05175">
    <property type="entry name" value="MTS"/>
    <property type="match status" value="1"/>
</dbReference>
<dbReference type="Pfam" id="PF08468">
    <property type="entry name" value="MTS_N"/>
    <property type="match status" value="1"/>
</dbReference>
<dbReference type="SUPFAM" id="SSF53335">
    <property type="entry name" value="S-adenosyl-L-methionine-dependent methyltransferases"/>
    <property type="match status" value="1"/>
</dbReference>
<comment type="function">
    <text evidence="1">Specifically methylates the guanine in position 1207 of 16S rRNA in the 30S particle.</text>
</comment>
<comment type="catalytic activity">
    <reaction evidence="1">
        <text>guanosine(1207) in 16S rRNA + S-adenosyl-L-methionine = N(2)-methylguanosine(1207) in 16S rRNA + S-adenosyl-L-homocysteine + H(+)</text>
        <dbReference type="Rhea" id="RHEA:42736"/>
        <dbReference type="Rhea" id="RHEA-COMP:10213"/>
        <dbReference type="Rhea" id="RHEA-COMP:10214"/>
        <dbReference type="ChEBI" id="CHEBI:15378"/>
        <dbReference type="ChEBI" id="CHEBI:57856"/>
        <dbReference type="ChEBI" id="CHEBI:59789"/>
        <dbReference type="ChEBI" id="CHEBI:74269"/>
        <dbReference type="ChEBI" id="CHEBI:74481"/>
        <dbReference type="EC" id="2.1.1.172"/>
    </reaction>
</comment>
<comment type="subunit">
    <text evidence="1">Monomer.</text>
</comment>
<comment type="subcellular location">
    <subcellularLocation>
        <location evidence="1">Cytoplasm</location>
    </subcellularLocation>
</comment>
<comment type="similarity">
    <text evidence="1">Belongs to the methyltransferase superfamily. RsmC family.</text>
</comment>
<evidence type="ECO:0000255" key="1">
    <source>
        <dbReference type="HAMAP-Rule" id="MF_01862"/>
    </source>
</evidence>
<reference key="1">
    <citation type="journal article" date="2010" name="PLoS ONE">
        <title>Genome sequence of Cronobacter sakazakii BAA-894 and comparative genomic hybridization analysis with other Cronobacter species.</title>
        <authorList>
            <person name="Kucerova E."/>
            <person name="Clifton S.W."/>
            <person name="Xia X.Q."/>
            <person name="Long F."/>
            <person name="Porwollik S."/>
            <person name="Fulton L."/>
            <person name="Fronick C."/>
            <person name="Minx P."/>
            <person name="Kyung K."/>
            <person name="Warren W."/>
            <person name="Fulton R."/>
            <person name="Feng D."/>
            <person name="Wollam A."/>
            <person name="Shah N."/>
            <person name="Bhonagiri V."/>
            <person name="Nash W.E."/>
            <person name="Hallsworth-Pepin K."/>
            <person name="Wilson R.K."/>
            <person name="McClelland M."/>
            <person name="Forsythe S.J."/>
        </authorList>
    </citation>
    <scope>NUCLEOTIDE SEQUENCE [LARGE SCALE GENOMIC DNA]</scope>
    <source>
        <strain>ATCC BAA-894</strain>
    </source>
</reference>
<keyword id="KW-0963">Cytoplasm</keyword>
<keyword id="KW-0489">Methyltransferase</keyword>
<keyword id="KW-1185">Reference proteome</keyword>
<keyword id="KW-0698">rRNA processing</keyword>
<keyword id="KW-0949">S-adenosyl-L-methionine</keyword>
<keyword id="KW-0808">Transferase</keyword>
<feature type="chain" id="PRO_0000369694" description="Ribosomal RNA small subunit methyltransferase C">
    <location>
        <begin position="1"/>
        <end position="342"/>
    </location>
</feature>
<gene>
    <name evidence="1" type="primary">rsmC</name>
    <name type="ordered locus">ESA_03381</name>
</gene>